<reference key="1">
    <citation type="journal article" date="1994" name="Gene">
        <title>Cloning and sequencing of the Lactococcus lactis subsp. lactis dnaK gene using a PCR-based approach.</title>
        <authorList>
            <person name="Barril M.J.S."/>
            <person name="Kim S.G."/>
            <person name="Batt C.A."/>
        </authorList>
    </citation>
    <scope>NUCLEOTIDE SEQUENCE [GENOMIC DNA]</scope>
    <source>
        <strain>LM0230</strain>
    </source>
</reference>
<reference key="2">
    <citation type="journal article" date="2001" name="Genome Res.">
        <title>The complete genome sequence of the lactic acid bacterium Lactococcus lactis ssp. lactis IL1403.</title>
        <authorList>
            <person name="Bolotin A."/>
            <person name="Wincker P."/>
            <person name="Mauger S."/>
            <person name="Jaillon O."/>
            <person name="Malarme K."/>
            <person name="Weissenbach J."/>
            <person name="Ehrlich S.D."/>
            <person name="Sorokin A."/>
        </authorList>
    </citation>
    <scope>NUCLEOTIDE SEQUENCE [LARGE SCALE GENOMIC DNA]</scope>
    <source>
        <strain>IL1403</strain>
    </source>
</reference>
<organism>
    <name type="scientific">Lactococcus lactis subsp. lactis (strain IL1403)</name>
    <name type="common">Streptococcus lactis</name>
    <dbReference type="NCBI Taxonomy" id="272623"/>
    <lineage>
        <taxon>Bacteria</taxon>
        <taxon>Bacillati</taxon>
        <taxon>Bacillota</taxon>
        <taxon>Bacilli</taxon>
        <taxon>Lactobacillales</taxon>
        <taxon>Streptococcaceae</taxon>
        <taxon>Lactococcus</taxon>
    </lineage>
</organism>
<accession>P0A3J0</accession>
<accession>P42368</accession>
<accession>Q9CGY8</accession>
<keyword id="KW-0067">ATP-binding</keyword>
<keyword id="KW-0143">Chaperone</keyword>
<keyword id="KW-0547">Nucleotide-binding</keyword>
<keyword id="KW-0597">Phosphoprotein</keyword>
<keyword id="KW-1185">Reference proteome</keyword>
<keyword id="KW-0346">Stress response</keyword>
<evidence type="ECO:0000250" key="1"/>
<evidence type="ECO:0000256" key="2">
    <source>
        <dbReference type="SAM" id="MobiDB-lite"/>
    </source>
</evidence>
<evidence type="ECO:0000305" key="3"/>
<sequence length="607" mass="64987">MSKIIGIDLGTTNSAVAVLEGTESKIIPNPEGNRTTPSVVAFKNGEIIVGDAAKRQAVTNPETIISIKSKMGTSEKVSANGKEYTPQEISAMILQNLKATAEAYLGEKVEKAVITVPAYFNDAQRQATKDAGKIAGLEVERIVNEPTAAALAYGLDKTDKDEKILVFDLGGGTFDVSILELGDGVFDVLATAGNNKLGGDDFDQKIIDWMVAEFKKENGIDLAQDKMALQRLKDAAEKAKKDLSGVTTTQISLPFITAGAAGPLHLEMALTRAKFDELTHDLVEATRQPVRQALSDAGLSTSDIDEVLLVGGSTRIPAVVELVRHETNKEPNKSVNPDEVVAMGAAIQGGVITGDVKDVVLLDVTPLSLGIETMGGVFTKLIDRNTTIPTSKSQVFSTAADNQPAVDIHVLQGERPMAADNKTLGRFQLTDIPAAPRGIPQIEVTFDIDKNGIVSVKAKDLGTQKEQTIVIKSNSGLSDEEIDKMMKDAEANADADAKRKEEVDTRNEADALVFQTEKTLKDLEGKVEEAEVKKAEEAKEELKKALEGEDIDDIKAKSEALSEIAQNLAVKLYEQANAAQGEAGQATDAQEAPKDDNTFDGDFEESK</sequence>
<name>DNAK_LACLA</name>
<protein>
    <recommendedName>
        <fullName>Chaperone protein DnaK</fullName>
    </recommendedName>
    <alternativeName>
        <fullName>HSP70</fullName>
    </alternativeName>
    <alternativeName>
        <fullName>Heat shock 70 kDa protein</fullName>
    </alternativeName>
    <alternativeName>
        <fullName>Heat shock protein 70</fullName>
    </alternativeName>
</protein>
<comment type="function">
    <text evidence="1">Acts as a chaperone.</text>
</comment>
<comment type="induction">
    <text evidence="1">By stress conditions e.g. heat shock (By similarity).</text>
</comment>
<comment type="similarity">
    <text evidence="3">Belongs to the heat shock protein 70 family.</text>
</comment>
<gene>
    <name type="primary">dnaK</name>
    <name type="ordered locus">LL0954</name>
    <name type="ORF">L178206</name>
</gene>
<dbReference type="EMBL" id="X75428">
    <property type="protein sequence ID" value="CAA53179.1"/>
    <property type="molecule type" value="Genomic_DNA"/>
</dbReference>
<dbReference type="EMBL" id="AE005176">
    <property type="protein sequence ID" value="AAK05052.1"/>
    <property type="molecule type" value="Genomic_DNA"/>
</dbReference>
<dbReference type="PIR" id="B86744">
    <property type="entry name" value="B86744"/>
</dbReference>
<dbReference type="PIR" id="S39342">
    <property type="entry name" value="S39342"/>
</dbReference>
<dbReference type="RefSeq" id="NP_267110.1">
    <property type="nucleotide sequence ID" value="NC_002662.1"/>
</dbReference>
<dbReference type="RefSeq" id="WP_010905652.1">
    <property type="nucleotide sequence ID" value="NC_002662.1"/>
</dbReference>
<dbReference type="SMR" id="P0A3J0"/>
<dbReference type="MoonProt" id="P0A3J0"/>
<dbReference type="PaxDb" id="272623-L178206"/>
<dbReference type="EnsemblBacteria" id="AAK05052">
    <property type="protein sequence ID" value="AAK05052"/>
    <property type="gene ID" value="L178206"/>
</dbReference>
<dbReference type="KEGG" id="lla:L178206"/>
<dbReference type="PATRIC" id="fig|272623.7.peg.1021"/>
<dbReference type="eggNOG" id="COG0443">
    <property type="taxonomic scope" value="Bacteria"/>
</dbReference>
<dbReference type="HOGENOM" id="CLU_005965_2_1_9"/>
<dbReference type="OrthoDB" id="9766019at2"/>
<dbReference type="Proteomes" id="UP000002196">
    <property type="component" value="Chromosome"/>
</dbReference>
<dbReference type="GO" id="GO:0009986">
    <property type="term" value="C:cell surface"/>
    <property type="evidence" value="ECO:0000314"/>
    <property type="project" value="CAFA"/>
</dbReference>
<dbReference type="GO" id="GO:0005524">
    <property type="term" value="F:ATP binding"/>
    <property type="evidence" value="ECO:0007669"/>
    <property type="project" value="UniProtKB-UniRule"/>
</dbReference>
<dbReference type="GO" id="GO:0140662">
    <property type="term" value="F:ATP-dependent protein folding chaperone"/>
    <property type="evidence" value="ECO:0007669"/>
    <property type="project" value="InterPro"/>
</dbReference>
<dbReference type="GO" id="GO:2001065">
    <property type="term" value="F:mannan binding"/>
    <property type="evidence" value="ECO:0000314"/>
    <property type="project" value="CAFA"/>
</dbReference>
<dbReference type="GO" id="GO:0051082">
    <property type="term" value="F:unfolded protein binding"/>
    <property type="evidence" value="ECO:0007669"/>
    <property type="project" value="InterPro"/>
</dbReference>
<dbReference type="GO" id="GO:0044406">
    <property type="term" value="P:adhesion of symbiont to host"/>
    <property type="evidence" value="ECO:0000314"/>
    <property type="project" value="CAFA"/>
</dbReference>
<dbReference type="GO" id="GO:0098630">
    <property type="term" value="P:aggregation of unicellular organisms"/>
    <property type="evidence" value="ECO:0000314"/>
    <property type="project" value="CAFA"/>
</dbReference>
<dbReference type="CDD" id="cd10234">
    <property type="entry name" value="ASKHA_NBD_HSP70_DnaK-like"/>
    <property type="match status" value="1"/>
</dbReference>
<dbReference type="FunFam" id="2.60.34.10:FF:000014">
    <property type="entry name" value="Chaperone protein DnaK HSP70"/>
    <property type="match status" value="1"/>
</dbReference>
<dbReference type="FunFam" id="1.20.1270.10:FF:000004">
    <property type="entry name" value="Molecular chaperone DnaK"/>
    <property type="match status" value="1"/>
</dbReference>
<dbReference type="FunFam" id="3.30.420.40:FF:000071">
    <property type="entry name" value="Molecular chaperone DnaK"/>
    <property type="match status" value="1"/>
</dbReference>
<dbReference type="FunFam" id="3.90.640.10:FF:000003">
    <property type="entry name" value="Molecular chaperone DnaK"/>
    <property type="match status" value="1"/>
</dbReference>
<dbReference type="Gene3D" id="1.20.1270.10">
    <property type="match status" value="1"/>
</dbReference>
<dbReference type="Gene3D" id="3.30.420.40">
    <property type="match status" value="2"/>
</dbReference>
<dbReference type="Gene3D" id="3.90.640.10">
    <property type="entry name" value="Actin, Chain A, domain 4"/>
    <property type="match status" value="1"/>
</dbReference>
<dbReference type="Gene3D" id="2.60.34.10">
    <property type="entry name" value="Substrate Binding Domain Of DNAk, Chain A, domain 1"/>
    <property type="match status" value="1"/>
</dbReference>
<dbReference type="HAMAP" id="MF_00332">
    <property type="entry name" value="DnaK"/>
    <property type="match status" value="1"/>
</dbReference>
<dbReference type="InterPro" id="IPR043129">
    <property type="entry name" value="ATPase_NBD"/>
</dbReference>
<dbReference type="InterPro" id="IPR012725">
    <property type="entry name" value="Chaperone_DnaK"/>
</dbReference>
<dbReference type="InterPro" id="IPR018181">
    <property type="entry name" value="Heat_shock_70_CS"/>
</dbReference>
<dbReference type="InterPro" id="IPR029048">
    <property type="entry name" value="HSP70_C_sf"/>
</dbReference>
<dbReference type="InterPro" id="IPR029047">
    <property type="entry name" value="HSP70_peptide-bd_sf"/>
</dbReference>
<dbReference type="InterPro" id="IPR013126">
    <property type="entry name" value="Hsp_70_fam"/>
</dbReference>
<dbReference type="NCBIfam" id="NF001413">
    <property type="entry name" value="PRK00290.1"/>
    <property type="match status" value="1"/>
</dbReference>
<dbReference type="NCBIfam" id="TIGR02350">
    <property type="entry name" value="prok_dnaK"/>
    <property type="match status" value="1"/>
</dbReference>
<dbReference type="PANTHER" id="PTHR19375">
    <property type="entry name" value="HEAT SHOCK PROTEIN 70KDA"/>
    <property type="match status" value="1"/>
</dbReference>
<dbReference type="Pfam" id="PF00012">
    <property type="entry name" value="HSP70"/>
    <property type="match status" value="1"/>
</dbReference>
<dbReference type="PRINTS" id="PR00301">
    <property type="entry name" value="HEATSHOCK70"/>
</dbReference>
<dbReference type="SUPFAM" id="SSF53067">
    <property type="entry name" value="Actin-like ATPase domain"/>
    <property type="match status" value="2"/>
</dbReference>
<dbReference type="SUPFAM" id="SSF100934">
    <property type="entry name" value="Heat shock protein 70kD (HSP70), C-terminal subdomain"/>
    <property type="match status" value="1"/>
</dbReference>
<dbReference type="SUPFAM" id="SSF100920">
    <property type="entry name" value="Heat shock protein 70kD (HSP70), peptide-binding domain"/>
    <property type="match status" value="1"/>
</dbReference>
<dbReference type="PROSITE" id="PS00297">
    <property type="entry name" value="HSP70_1"/>
    <property type="match status" value="1"/>
</dbReference>
<dbReference type="PROSITE" id="PS00329">
    <property type="entry name" value="HSP70_2"/>
    <property type="match status" value="1"/>
</dbReference>
<dbReference type="PROSITE" id="PS01036">
    <property type="entry name" value="HSP70_3"/>
    <property type="match status" value="1"/>
</dbReference>
<proteinExistence type="inferred from homology"/>
<feature type="chain" id="PRO_0000078473" description="Chaperone protein DnaK">
    <location>
        <begin position="1"/>
        <end position="607"/>
    </location>
</feature>
<feature type="region of interest" description="Disordered" evidence="2">
    <location>
        <begin position="578"/>
        <end position="607"/>
    </location>
</feature>
<feature type="compositionally biased region" description="Acidic residues" evidence="2">
    <location>
        <begin position="598"/>
        <end position="607"/>
    </location>
</feature>
<feature type="modified residue" description="Phosphothreonine; by autocatalysis" evidence="1">
    <location>
        <position position="173"/>
    </location>
</feature>
<feature type="sequence variant" description="In strain: LM0230.">
    <original>A</original>
    <variation>S</variation>
    <location>
        <position position="103"/>
    </location>
</feature>
<feature type="sequence variant" description="In strain: LM0230.">
    <original>A</original>
    <variation>G</variation>
    <location>
        <position position="223"/>
    </location>
</feature>
<feature type="sequence variant" description="In strain: LM0230.">
    <original>E</original>
    <variation>D</variation>
    <location>
        <position position="537"/>
    </location>
</feature>
<feature type="sequence variant" description="In strain: LM0230.">
    <original>GQ</original>
    <variation>SE</variation>
    <location>
        <begin position="584"/>
        <end position="585"/>
    </location>
</feature>
<feature type="sequence variant" description="In strain: LM0230.">
    <original>A</original>
    <variation>G</variation>
    <location>
        <position position="592"/>
    </location>
</feature>
<feature type="sequence variant" description="In strain: LM0230.">
    <original>D</original>
    <variation>A</variation>
    <location>
        <position position="596"/>
    </location>
</feature>